<gene>
    <name type="primary">sle1</name>
    <name type="synonym">aaa</name>
    <name type="ordered locus">SAUSA300_0438</name>
</gene>
<evidence type="ECO:0000250" key="1"/>
<evidence type="ECO:0000255" key="2"/>
<evidence type="ECO:0000255" key="3">
    <source>
        <dbReference type="PROSITE-ProRule" id="PRU00048"/>
    </source>
</evidence>
<evidence type="ECO:0000255" key="4">
    <source>
        <dbReference type="PROSITE-ProRule" id="PRU01118"/>
    </source>
</evidence>
<evidence type="ECO:0000256" key="5">
    <source>
        <dbReference type="SAM" id="MobiDB-lite"/>
    </source>
</evidence>
<dbReference type="EC" id="3.5.1.28"/>
<dbReference type="EMBL" id="CP000255">
    <property type="protein sequence ID" value="ABD20550.1"/>
    <property type="molecule type" value="Genomic_DNA"/>
</dbReference>
<dbReference type="RefSeq" id="WP_001170264.1">
    <property type="nucleotide sequence ID" value="NZ_CP027476.1"/>
</dbReference>
<dbReference type="SMR" id="Q2FJH7"/>
<dbReference type="KEGG" id="saa:SAUSA300_0438"/>
<dbReference type="HOGENOM" id="CLU_016043_1_3_9"/>
<dbReference type="OMA" id="TPVFNHQ"/>
<dbReference type="Proteomes" id="UP000001939">
    <property type="component" value="Chromosome"/>
</dbReference>
<dbReference type="GO" id="GO:0009986">
    <property type="term" value="C:cell surface"/>
    <property type="evidence" value="ECO:0007669"/>
    <property type="project" value="UniProtKB-SubCell"/>
</dbReference>
<dbReference type="GO" id="GO:0005576">
    <property type="term" value="C:extracellular region"/>
    <property type="evidence" value="ECO:0007669"/>
    <property type="project" value="UniProtKB-SubCell"/>
</dbReference>
<dbReference type="GO" id="GO:0008932">
    <property type="term" value="F:lytic endotransglycosylase activity"/>
    <property type="evidence" value="ECO:0007669"/>
    <property type="project" value="TreeGrafter"/>
</dbReference>
<dbReference type="GO" id="GO:0008745">
    <property type="term" value="F:N-acetylmuramoyl-L-alanine amidase activity"/>
    <property type="evidence" value="ECO:0007669"/>
    <property type="project" value="UniProtKB-EC"/>
</dbReference>
<dbReference type="GO" id="GO:0071555">
    <property type="term" value="P:cell wall organization"/>
    <property type="evidence" value="ECO:0007669"/>
    <property type="project" value="UniProtKB-KW"/>
</dbReference>
<dbReference type="GO" id="GO:0042742">
    <property type="term" value="P:defense response to bacterium"/>
    <property type="evidence" value="ECO:0007669"/>
    <property type="project" value="UniProtKB-KW"/>
</dbReference>
<dbReference type="GO" id="GO:0000917">
    <property type="term" value="P:division septum assembly"/>
    <property type="evidence" value="ECO:0007669"/>
    <property type="project" value="UniProtKB-KW"/>
</dbReference>
<dbReference type="GO" id="GO:0031640">
    <property type="term" value="P:killing of cells of another organism"/>
    <property type="evidence" value="ECO:0007669"/>
    <property type="project" value="UniProtKB-KW"/>
</dbReference>
<dbReference type="CDD" id="cd00118">
    <property type="entry name" value="LysM"/>
    <property type="match status" value="3"/>
</dbReference>
<dbReference type="Gene3D" id="3.90.1720.10">
    <property type="entry name" value="endopeptidase domain like (from Nostoc punctiforme)"/>
    <property type="match status" value="1"/>
</dbReference>
<dbReference type="Gene3D" id="3.10.350.10">
    <property type="entry name" value="LysM domain"/>
    <property type="match status" value="3"/>
</dbReference>
<dbReference type="InterPro" id="IPR007921">
    <property type="entry name" value="CHAP_dom"/>
</dbReference>
<dbReference type="InterPro" id="IPR018392">
    <property type="entry name" value="LysM_dom"/>
</dbReference>
<dbReference type="InterPro" id="IPR036779">
    <property type="entry name" value="LysM_dom_sf"/>
</dbReference>
<dbReference type="InterPro" id="IPR038765">
    <property type="entry name" value="Papain-like_cys_pep_sf"/>
</dbReference>
<dbReference type="PANTHER" id="PTHR33734">
    <property type="entry name" value="LYSM DOMAIN-CONTAINING GPI-ANCHORED PROTEIN 2"/>
    <property type="match status" value="1"/>
</dbReference>
<dbReference type="PANTHER" id="PTHR33734:SF22">
    <property type="entry name" value="MEMBRANE-BOUND LYTIC MUREIN TRANSGLYCOSYLASE D"/>
    <property type="match status" value="1"/>
</dbReference>
<dbReference type="Pfam" id="PF05257">
    <property type="entry name" value="CHAP"/>
    <property type="match status" value="1"/>
</dbReference>
<dbReference type="Pfam" id="PF01476">
    <property type="entry name" value="LysM"/>
    <property type="match status" value="3"/>
</dbReference>
<dbReference type="SMART" id="SM00257">
    <property type="entry name" value="LysM"/>
    <property type="match status" value="3"/>
</dbReference>
<dbReference type="SUPFAM" id="SSF54001">
    <property type="entry name" value="Cysteine proteinases"/>
    <property type="match status" value="1"/>
</dbReference>
<dbReference type="SUPFAM" id="SSF54106">
    <property type="entry name" value="LysM domain"/>
    <property type="match status" value="3"/>
</dbReference>
<dbReference type="PROSITE" id="PS50911">
    <property type="entry name" value="CHAP"/>
    <property type="match status" value="1"/>
</dbReference>
<dbReference type="PROSITE" id="PS51782">
    <property type="entry name" value="LYSM"/>
    <property type="match status" value="3"/>
</dbReference>
<protein>
    <recommendedName>
        <fullName>N-acetylmuramoyl-L-alanine amidase sle1</fullName>
        <ecNumber>3.5.1.28</ecNumber>
    </recommendedName>
</protein>
<name>SLE1_STAA3</name>
<feature type="signal peptide" evidence="2">
    <location>
        <begin position="1"/>
        <end position="25"/>
    </location>
</feature>
<feature type="chain" id="PRO_0000271076" description="N-acetylmuramoyl-L-alanine amidase sle1">
    <location>
        <begin position="26"/>
        <end position="334"/>
    </location>
</feature>
<feature type="domain" description="LysM 1" evidence="4">
    <location>
        <begin position="27"/>
        <end position="70"/>
    </location>
</feature>
<feature type="domain" description="LysM 2" evidence="4">
    <location>
        <begin position="91"/>
        <end position="134"/>
    </location>
</feature>
<feature type="domain" description="LysM 3" evidence="4">
    <location>
        <begin position="158"/>
        <end position="201"/>
    </location>
</feature>
<feature type="domain" description="Peptidase C51" evidence="3">
    <location>
        <begin position="210"/>
        <end position="334"/>
    </location>
</feature>
<feature type="region of interest" description="Disordered" evidence="5">
    <location>
        <begin position="71"/>
        <end position="90"/>
    </location>
</feature>
<feature type="compositionally biased region" description="Low complexity" evidence="5">
    <location>
        <begin position="71"/>
        <end position="86"/>
    </location>
</feature>
<proteinExistence type="inferred from homology"/>
<keyword id="KW-0929">Antimicrobial</keyword>
<keyword id="KW-0081">Bacteriolytic enzyme</keyword>
<keyword id="KW-0131">Cell cycle</keyword>
<keyword id="KW-0132">Cell division</keyword>
<keyword id="KW-0961">Cell wall biogenesis/degradation</keyword>
<keyword id="KW-0378">Hydrolase</keyword>
<keyword id="KW-0677">Repeat</keyword>
<keyword id="KW-0964">Secreted</keyword>
<keyword id="KW-0717">Septation</keyword>
<keyword id="KW-0732">Signal</keyword>
<keyword id="KW-0843">Virulence</keyword>
<organism>
    <name type="scientific">Staphylococcus aureus (strain USA300)</name>
    <dbReference type="NCBI Taxonomy" id="367830"/>
    <lineage>
        <taxon>Bacteria</taxon>
        <taxon>Bacillati</taxon>
        <taxon>Bacillota</taxon>
        <taxon>Bacilli</taxon>
        <taxon>Bacillales</taxon>
        <taxon>Staphylococcaceae</taxon>
        <taxon>Staphylococcus</taxon>
    </lineage>
</organism>
<comment type="function">
    <text evidence="1">Peptidoglycan hydrolase involved in the splitting of the septum during cell division.</text>
</comment>
<comment type="catalytic activity">
    <reaction>
        <text>Hydrolyzes the link between N-acetylmuramoyl residues and L-amino acid residues in certain cell-wall glycopeptides.</text>
        <dbReference type="EC" id="3.5.1.28"/>
    </reaction>
</comment>
<comment type="subcellular location">
    <subcellularLocation>
        <location evidence="1">Secreted</location>
    </subcellularLocation>
    <subcellularLocation>
        <location evidence="1">Cell surface</location>
    </subcellularLocation>
</comment>
<sequence>MQKKVIAAIIGTSAISAVAATQANAATTHTVKPGESVWAISNKYGISIAKLKSLNNLTSNLIFPNQVLKVSGSSNSTSNSSRPSTNSGGGSYYTVQAGDSLSLIASKYGTTYQNIMRLNGLNNFFIYPGQKLKVSGTASSSNAASNSSRPSTNSGGGSYYTVQAGDSLSLIASKYGTTYQKIMSLNGLNNFFIYPGQKLKVTGNASTNSGSATTTNRGYNTPVFSHQNLYTWGQCTYHVFNRRAEIGKGISTYWWNANNWDNAAAADGYTIDNRPTVGSIAQTDVGYYGHVMFVERVNNDGSILVSEMNYSAAPGILTYRTVPAYQVNNYRYIH</sequence>
<reference key="1">
    <citation type="journal article" date="2006" name="Lancet">
        <title>Complete genome sequence of USA300, an epidemic clone of community-acquired meticillin-resistant Staphylococcus aureus.</title>
        <authorList>
            <person name="Diep B.A."/>
            <person name="Gill S.R."/>
            <person name="Chang R.F."/>
            <person name="Phan T.H."/>
            <person name="Chen J.H."/>
            <person name="Davidson M.G."/>
            <person name="Lin F."/>
            <person name="Lin J."/>
            <person name="Carleton H.A."/>
            <person name="Mongodin E.F."/>
            <person name="Sensabaugh G.F."/>
            <person name="Perdreau-Remington F."/>
        </authorList>
    </citation>
    <scope>NUCLEOTIDE SEQUENCE [LARGE SCALE GENOMIC DNA]</scope>
    <source>
        <strain>USA300</strain>
    </source>
</reference>
<accession>Q2FJH7</accession>